<gene>
    <name evidence="1" type="primary">coaD</name>
    <name type="ordered locus">SPN23F19890</name>
</gene>
<comment type="function">
    <text evidence="1">Reversibly transfers an adenylyl group from ATP to 4'-phosphopantetheine, yielding dephospho-CoA (dPCoA) and pyrophosphate.</text>
</comment>
<comment type="catalytic activity">
    <reaction evidence="1">
        <text>(R)-4'-phosphopantetheine + ATP + H(+) = 3'-dephospho-CoA + diphosphate</text>
        <dbReference type="Rhea" id="RHEA:19801"/>
        <dbReference type="ChEBI" id="CHEBI:15378"/>
        <dbReference type="ChEBI" id="CHEBI:30616"/>
        <dbReference type="ChEBI" id="CHEBI:33019"/>
        <dbReference type="ChEBI" id="CHEBI:57328"/>
        <dbReference type="ChEBI" id="CHEBI:61723"/>
        <dbReference type="EC" id="2.7.7.3"/>
    </reaction>
</comment>
<comment type="cofactor">
    <cofactor evidence="1">
        <name>Mg(2+)</name>
        <dbReference type="ChEBI" id="CHEBI:18420"/>
    </cofactor>
</comment>
<comment type="pathway">
    <text evidence="1">Cofactor biosynthesis; coenzyme A biosynthesis; CoA from (R)-pantothenate: step 4/5.</text>
</comment>
<comment type="subunit">
    <text evidence="1">Homohexamer.</text>
</comment>
<comment type="subcellular location">
    <subcellularLocation>
        <location evidence="1">Cytoplasm</location>
    </subcellularLocation>
</comment>
<comment type="similarity">
    <text evidence="1">Belongs to the bacterial CoaD family.</text>
</comment>
<evidence type="ECO:0000255" key="1">
    <source>
        <dbReference type="HAMAP-Rule" id="MF_00151"/>
    </source>
</evidence>
<sequence length="162" mass="18489">MSDKIGLFTGSFDPMTNGHLDMIERASRLFDKLYVGIFFNPHKQGFLPLENRKRGLEKAVKHLGNVKVVSSHDELVVDVAKRLGATCLVRGLRNASDLQYEASFDYYNHQLSSDIETIYLHSRPEHLYISSSGVRELLKFGQDIACYVPESILEEIRNEKKD</sequence>
<keyword id="KW-0067">ATP-binding</keyword>
<keyword id="KW-0173">Coenzyme A biosynthesis</keyword>
<keyword id="KW-0963">Cytoplasm</keyword>
<keyword id="KW-0460">Magnesium</keyword>
<keyword id="KW-0547">Nucleotide-binding</keyword>
<keyword id="KW-0548">Nucleotidyltransferase</keyword>
<keyword id="KW-0808">Transferase</keyword>
<name>COAD_STRPJ</name>
<reference key="1">
    <citation type="journal article" date="2009" name="J. Bacteriol.">
        <title>Role of conjugative elements in the evolution of the multidrug-resistant pandemic clone Streptococcus pneumoniae Spain23F ST81.</title>
        <authorList>
            <person name="Croucher N.J."/>
            <person name="Walker D."/>
            <person name="Romero P."/>
            <person name="Lennard N."/>
            <person name="Paterson G.K."/>
            <person name="Bason N.C."/>
            <person name="Mitchell A.M."/>
            <person name="Quail M.A."/>
            <person name="Andrew P.W."/>
            <person name="Parkhill J."/>
            <person name="Bentley S.D."/>
            <person name="Mitchell T.J."/>
        </authorList>
    </citation>
    <scope>NUCLEOTIDE SEQUENCE [LARGE SCALE GENOMIC DNA]</scope>
    <source>
        <strain>ATCC 700669 / Spain 23F-1</strain>
    </source>
</reference>
<accession>B8ZNX4</accession>
<proteinExistence type="inferred from homology"/>
<protein>
    <recommendedName>
        <fullName evidence="1">Phosphopantetheine adenylyltransferase</fullName>
        <ecNumber evidence="1">2.7.7.3</ecNumber>
    </recommendedName>
    <alternativeName>
        <fullName evidence="1">Dephospho-CoA pyrophosphorylase</fullName>
    </alternativeName>
    <alternativeName>
        <fullName evidence="1">Pantetheine-phosphate adenylyltransferase</fullName>
        <shortName evidence="1">PPAT</shortName>
    </alternativeName>
</protein>
<organism>
    <name type="scientific">Streptococcus pneumoniae (strain ATCC 700669 / Spain 23F-1)</name>
    <dbReference type="NCBI Taxonomy" id="561276"/>
    <lineage>
        <taxon>Bacteria</taxon>
        <taxon>Bacillati</taxon>
        <taxon>Bacillota</taxon>
        <taxon>Bacilli</taxon>
        <taxon>Lactobacillales</taxon>
        <taxon>Streptococcaceae</taxon>
        <taxon>Streptococcus</taxon>
    </lineage>
</organism>
<dbReference type="EC" id="2.7.7.3" evidence="1"/>
<dbReference type="EMBL" id="FM211187">
    <property type="protein sequence ID" value="CAR69740.1"/>
    <property type="molecule type" value="Genomic_DNA"/>
</dbReference>
<dbReference type="RefSeq" id="WP_001280766.1">
    <property type="nucleotide sequence ID" value="NC_011900.1"/>
</dbReference>
<dbReference type="SMR" id="B8ZNX4"/>
<dbReference type="KEGG" id="sne:SPN23F19890"/>
<dbReference type="HOGENOM" id="CLU_100149_0_1_9"/>
<dbReference type="UniPathway" id="UPA00241">
    <property type="reaction ID" value="UER00355"/>
</dbReference>
<dbReference type="GO" id="GO:0005737">
    <property type="term" value="C:cytoplasm"/>
    <property type="evidence" value="ECO:0007669"/>
    <property type="project" value="UniProtKB-SubCell"/>
</dbReference>
<dbReference type="GO" id="GO:0005524">
    <property type="term" value="F:ATP binding"/>
    <property type="evidence" value="ECO:0007669"/>
    <property type="project" value="UniProtKB-KW"/>
</dbReference>
<dbReference type="GO" id="GO:0004595">
    <property type="term" value="F:pantetheine-phosphate adenylyltransferase activity"/>
    <property type="evidence" value="ECO:0007669"/>
    <property type="project" value="UniProtKB-UniRule"/>
</dbReference>
<dbReference type="GO" id="GO:0015937">
    <property type="term" value="P:coenzyme A biosynthetic process"/>
    <property type="evidence" value="ECO:0007669"/>
    <property type="project" value="UniProtKB-UniRule"/>
</dbReference>
<dbReference type="CDD" id="cd02163">
    <property type="entry name" value="PPAT"/>
    <property type="match status" value="1"/>
</dbReference>
<dbReference type="Gene3D" id="3.40.50.620">
    <property type="entry name" value="HUPs"/>
    <property type="match status" value="1"/>
</dbReference>
<dbReference type="HAMAP" id="MF_00151">
    <property type="entry name" value="PPAT_bact"/>
    <property type="match status" value="1"/>
</dbReference>
<dbReference type="InterPro" id="IPR004821">
    <property type="entry name" value="Cyt_trans-like"/>
</dbReference>
<dbReference type="InterPro" id="IPR001980">
    <property type="entry name" value="PPAT"/>
</dbReference>
<dbReference type="InterPro" id="IPR014729">
    <property type="entry name" value="Rossmann-like_a/b/a_fold"/>
</dbReference>
<dbReference type="NCBIfam" id="TIGR01510">
    <property type="entry name" value="coaD_prev_kdtB"/>
    <property type="match status" value="1"/>
</dbReference>
<dbReference type="NCBIfam" id="TIGR00125">
    <property type="entry name" value="cyt_tran_rel"/>
    <property type="match status" value="1"/>
</dbReference>
<dbReference type="PANTHER" id="PTHR21342">
    <property type="entry name" value="PHOSPHOPANTETHEINE ADENYLYLTRANSFERASE"/>
    <property type="match status" value="1"/>
</dbReference>
<dbReference type="PANTHER" id="PTHR21342:SF1">
    <property type="entry name" value="PHOSPHOPANTETHEINE ADENYLYLTRANSFERASE"/>
    <property type="match status" value="1"/>
</dbReference>
<dbReference type="Pfam" id="PF01467">
    <property type="entry name" value="CTP_transf_like"/>
    <property type="match status" value="1"/>
</dbReference>
<dbReference type="PRINTS" id="PR01020">
    <property type="entry name" value="LPSBIOSNTHSS"/>
</dbReference>
<dbReference type="SUPFAM" id="SSF52374">
    <property type="entry name" value="Nucleotidylyl transferase"/>
    <property type="match status" value="1"/>
</dbReference>
<feature type="chain" id="PRO_1000123303" description="Phosphopantetheine adenylyltransferase">
    <location>
        <begin position="1"/>
        <end position="162"/>
    </location>
</feature>
<feature type="binding site" evidence="1">
    <location>
        <begin position="11"/>
        <end position="12"/>
    </location>
    <ligand>
        <name>ATP</name>
        <dbReference type="ChEBI" id="CHEBI:30616"/>
    </ligand>
</feature>
<feature type="binding site" evidence="1">
    <location>
        <position position="11"/>
    </location>
    <ligand>
        <name>substrate</name>
    </ligand>
</feature>
<feature type="binding site" evidence="1">
    <location>
        <position position="19"/>
    </location>
    <ligand>
        <name>ATP</name>
        <dbReference type="ChEBI" id="CHEBI:30616"/>
    </ligand>
</feature>
<feature type="binding site" evidence="1">
    <location>
        <position position="43"/>
    </location>
    <ligand>
        <name>substrate</name>
    </ligand>
</feature>
<feature type="binding site" evidence="1">
    <location>
        <position position="76"/>
    </location>
    <ligand>
        <name>substrate</name>
    </ligand>
</feature>
<feature type="binding site" evidence="1">
    <location>
        <position position="90"/>
    </location>
    <ligand>
        <name>substrate</name>
    </ligand>
</feature>
<feature type="binding site" evidence="1">
    <location>
        <begin position="91"/>
        <end position="93"/>
    </location>
    <ligand>
        <name>ATP</name>
        <dbReference type="ChEBI" id="CHEBI:30616"/>
    </ligand>
</feature>
<feature type="binding site" evidence="1">
    <location>
        <position position="101"/>
    </location>
    <ligand>
        <name>ATP</name>
        <dbReference type="ChEBI" id="CHEBI:30616"/>
    </ligand>
</feature>
<feature type="binding site" evidence="1">
    <location>
        <begin position="126"/>
        <end position="132"/>
    </location>
    <ligand>
        <name>ATP</name>
        <dbReference type="ChEBI" id="CHEBI:30616"/>
    </ligand>
</feature>
<feature type="site" description="Transition state stabilizer" evidence="1">
    <location>
        <position position="19"/>
    </location>
</feature>